<dbReference type="EMBL" id="D50543">
    <property type="protein sequence ID" value="BAA09107.1"/>
    <property type="molecule type" value="Genomic_DNA"/>
</dbReference>
<dbReference type="EMBL" id="AL009126">
    <property type="protein sequence ID" value="CAB12651.1"/>
    <property type="molecule type" value="Genomic_DNA"/>
</dbReference>
<dbReference type="PIR" id="F69802">
    <property type="entry name" value="F69802"/>
</dbReference>
<dbReference type="RefSeq" id="NP_388703.1">
    <property type="nucleotide sequence ID" value="NC_000964.3"/>
</dbReference>
<dbReference type="RefSeq" id="WP_003244082.1">
    <property type="nucleotide sequence ID" value="NZ_OZ025638.1"/>
</dbReference>
<dbReference type="SMR" id="P54719"/>
<dbReference type="FunCoup" id="P54719">
    <property type="interactions" value="572"/>
</dbReference>
<dbReference type="STRING" id="224308.BSU08220"/>
<dbReference type="PaxDb" id="224308-BSU08220"/>
<dbReference type="EnsemblBacteria" id="CAB12651">
    <property type="protein sequence ID" value="CAB12651"/>
    <property type="gene ID" value="BSU_08220"/>
</dbReference>
<dbReference type="GeneID" id="936167"/>
<dbReference type="KEGG" id="bsu:BSU08220"/>
<dbReference type="PATRIC" id="fig|224308.179.peg.888"/>
<dbReference type="eggNOG" id="COG1132">
    <property type="taxonomic scope" value="Bacteria"/>
</dbReference>
<dbReference type="InParanoid" id="P54719"/>
<dbReference type="OrthoDB" id="9770415at2"/>
<dbReference type="PhylomeDB" id="P54719"/>
<dbReference type="BioCyc" id="BSUB:BSU08220-MONOMER"/>
<dbReference type="Proteomes" id="UP000001570">
    <property type="component" value="Chromosome"/>
</dbReference>
<dbReference type="GO" id="GO:0005886">
    <property type="term" value="C:plasma membrane"/>
    <property type="evidence" value="ECO:0007669"/>
    <property type="project" value="UniProtKB-SubCell"/>
</dbReference>
<dbReference type="GO" id="GO:0140359">
    <property type="term" value="F:ABC-type transporter activity"/>
    <property type="evidence" value="ECO:0007669"/>
    <property type="project" value="InterPro"/>
</dbReference>
<dbReference type="GO" id="GO:0005524">
    <property type="term" value="F:ATP binding"/>
    <property type="evidence" value="ECO:0007669"/>
    <property type="project" value="UniProtKB-KW"/>
</dbReference>
<dbReference type="GO" id="GO:0016887">
    <property type="term" value="F:ATP hydrolysis activity"/>
    <property type="evidence" value="ECO:0007669"/>
    <property type="project" value="InterPro"/>
</dbReference>
<dbReference type="GO" id="GO:0042626">
    <property type="term" value="F:ATPase-coupled transmembrane transporter activity"/>
    <property type="evidence" value="ECO:0000318"/>
    <property type="project" value="GO_Central"/>
</dbReference>
<dbReference type="GO" id="GO:0055085">
    <property type="term" value="P:transmembrane transport"/>
    <property type="evidence" value="ECO:0000318"/>
    <property type="project" value="GO_Central"/>
</dbReference>
<dbReference type="CDD" id="cd18547">
    <property type="entry name" value="ABC_6TM_Tm288_like"/>
    <property type="match status" value="1"/>
</dbReference>
<dbReference type="CDD" id="cd03254">
    <property type="entry name" value="ABCC_Glucan_exporter_like"/>
    <property type="match status" value="1"/>
</dbReference>
<dbReference type="FunFam" id="1.20.1560.10:FF:000011">
    <property type="entry name" value="Multidrug ABC transporter ATP-binding protein"/>
    <property type="match status" value="1"/>
</dbReference>
<dbReference type="FunFam" id="3.40.50.300:FF:000287">
    <property type="entry name" value="Multidrug ABC transporter ATP-binding protein"/>
    <property type="match status" value="1"/>
</dbReference>
<dbReference type="Gene3D" id="1.20.1560.10">
    <property type="entry name" value="ABC transporter type 1, transmembrane domain"/>
    <property type="match status" value="1"/>
</dbReference>
<dbReference type="Gene3D" id="3.40.50.300">
    <property type="entry name" value="P-loop containing nucleotide triphosphate hydrolases"/>
    <property type="match status" value="1"/>
</dbReference>
<dbReference type="InterPro" id="IPR003593">
    <property type="entry name" value="AAA+_ATPase"/>
</dbReference>
<dbReference type="InterPro" id="IPR011527">
    <property type="entry name" value="ABC1_TM_dom"/>
</dbReference>
<dbReference type="InterPro" id="IPR036640">
    <property type="entry name" value="ABC1_TM_sf"/>
</dbReference>
<dbReference type="InterPro" id="IPR003439">
    <property type="entry name" value="ABC_transporter-like_ATP-bd"/>
</dbReference>
<dbReference type="InterPro" id="IPR017871">
    <property type="entry name" value="ABC_transporter-like_CS"/>
</dbReference>
<dbReference type="InterPro" id="IPR027417">
    <property type="entry name" value="P-loop_NTPase"/>
</dbReference>
<dbReference type="InterPro" id="IPR039421">
    <property type="entry name" value="Type_1_exporter"/>
</dbReference>
<dbReference type="PANTHER" id="PTHR43394:SF1">
    <property type="entry name" value="ATP-BINDING CASSETTE SUB-FAMILY B MEMBER 10, MITOCHONDRIAL"/>
    <property type="match status" value="1"/>
</dbReference>
<dbReference type="PANTHER" id="PTHR43394">
    <property type="entry name" value="ATP-DEPENDENT PERMEASE MDL1, MITOCHONDRIAL"/>
    <property type="match status" value="1"/>
</dbReference>
<dbReference type="Pfam" id="PF00664">
    <property type="entry name" value="ABC_membrane"/>
    <property type="match status" value="1"/>
</dbReference>
<dbReference type="Pfam" id="PF00005">
    <property type="entry name" value="ABC_tran"/>
    <property type="match status" value="1"/>
</dbReference>
<dbReference type="SMART" id="SM00382">
    <property type="entry name" value="AAA"/>
    <property type="match status" value="1"/>
</dbReference>
<dbReference type="SUPFAM" id="SSF90123">
    <property type="entry name" value="ABC transporter transmembrane region"/>
    <property type="match status" value="1"/>
</dbReference>
<dbReference type="SUPFAM" id="SSF52540">
    <property type="entry name" value="P-loop containing nucleoside triphosphate hydrolases"/>
    <property type="match status" value="1"/>
</dbReference>
<dbReference type="PROSITE" id="PS50929">
    <property type="entry name" value="ABC_TM1F"/>
    <property type="match status" value="1"/>
</dbReference>
<dbReference type="PROSITE" id="PS00211">
    <property type="entry name" value="ABC_TRANSPORTER_1"/>
    <property type="match status" value="1"/>
</dbReference>
<dbReference type="PROSITE" id="PS50893">
    <property type="entry name" value="ABC_TRANSPORTER_2"/>
    <property type="match status" value="1"/>
</dbReference>
<reference key="1">
    <citation type="journal article" date="1996" name="Microbiology">
        <title>Determination of a 12 kb nucleotide sequence around the 76 degrees region of the Bacillus subtilis chromosome.</title>
        <authorList>
            <person name="Yamamoto H."/>
            <person name="Uchiyama S."/>
            <person name="Fajar A.N."/>
            <person name="Ogasawara N."/>
            <person name="Sekiguchi J."/>
        </authorList>
    </citation>
    <scope>NUCLEOTIDE SEQUENCE [GENOMIC DNA]</scope>
    <source>
        <strain>168</strain>
    </source>
</reference>
<reference key="2">
    <citation type="journal article" date="1997" name="Nature">
        <title>The complete genome sequence of the Gram-positive bacterium Bacillus subtilis.</title>
        <authorList>
            <person name="Kunst F."/>
            <person name="Ogasawara N."/>
            <person name="Moszer I."/>
            <person name="Albertini A.M."/>
            <person name="Alloni G."/>
            <person name="Azevedo V."/>
            <person name="Bertero M.G."/>
            <person name="Bessieres P."/>
            <person name="Bolotin A."/>
            <person name="Borchert S."/>
            <person name="Borriss R."/>
            <person name="Boursier L."/>
            <person name="Brans A."/>
            <person name="Braun M."/>
            <person name="Brignell S.C."/>
            <person name="Bron S."/>
            <person name="Brouillet S."/>
            <person name="Bruschi C.V."/>
            <person name="Caldwell B."/>
            <person name="Capuano V."/>
            <person name="Carter N.M."/>
            <person name="Choi S.-K."/>
            <person name="Codani J.-J."/>
            <person name="Connerton I.F."/>
            <person name="Cummings N.J."/>
            <person name="Daniel R.A."/>
            <person name="Denizot F."/>
            <person name="Devine K.M."/>
            <person name="Duesterhoeft A."/>
            <person name="Ehrlich S.D."/>
            <person name="Emmerson P.T."/>
            <person name="Entian K.-D."/>
            <person name="Errington J."/>
            <person name="Fabret C."/>
            <person name="Ferrari E."/>
            <person name="Foulger D."/>
            <person name="Fritz C."/>
            <person name="Fujita M."/>
            <person name="Fujita Y."/>
            <person name="Fuma S."/>
            <person name="Galizzi A."/>
            <person name="Galleron N."/>
            <person name="Ghim S.-Y."/>
            <person name="Glaser P."/>
            <person name="Goffeau A."/>
            <person name="Golightly E.J."/>
            <person name="Grandi G."/>
            <person name="Guiseppi G."/>
            <person name="Guy B.J."/>
            <person name="Haga K."/>
            <person name="Haiech J."/>
            <person name="Harwood C.R."/>
            <person name="Henaut A."/>
            <person name="Hilbert H."/>
            <person name="Holsappel S."/>
            <person name="Hosono S."/>
            <person name="Hullo M.-F."/>
            <person name="Itaya M."/>
            <person name="Jones L.-M."/>
            <person name="Joris B."/>
            <person name="Karamata D."/>
            <person name="Kasahara Y."/>
            <person name="Klaerr-Blanchard M."/>
            <person name="Klein C."/>
            <person name="Kobayashi Y."/>
            <person name="Koetter P."/>
            <person name="Koningstein G."/>
            <person name="Krogh S."/>
            <person name="Kumano M."/>
            <person name="Kurita K."/>
            <person name="Lapidus A."/>
            <person name="Lardinois S."/>
            <person name="Lauber J."/>
            <person name="Lazarevic V."/>
            <person name="Lee S.-M."/>
            <person name="Levine A."/>
            <person name="Liu H."/>
            <person name="Masuda S."/>
            <person name="Mauel C."/>
            <person name="Medigue C."/>
            <person name="Medina N."/>
            <person name="Mellado R.P."/>
            <person name="Mizuno M."/>
            <person name="Moestl D."/>
            <person name="Nakai S."/>
            <person name="Noback M."/>
            <person name="Noone D."/>
            <person name="O'Reilly M."/>
            <person name="Ogawa K."/>
            <person name="Ogiwara A."/>
            <person name="Oudega B."/>
            <person name="Park S.-H."/>
            <person name="Parro V."/>
            <person name="Pohl T.M."/>
            <person name="Portetelle D."/>
            <person name="Porwollik S."/>
            <person name="Prescott A.M."/>
            <person name="Presecan E."/>
            <person name="Pujic P."/>
            <person name="Purnelle B."/>
            <person name="Rapoport G."/>
            <person name="Rey M."/>
            <person name="Reynolds S."/>
            <person name="Rieger M."/>
            <person name="Rivolta C."/>
            <person name="Rocha E."/>
            <person name="Roche B."/>
            <person name="Rose M."/>
            <person name="Sadaie Y."/>
            <person name="Sato T."/>
            <person name="Scanlan E."/>
            <person name="Schleich S."/>
            <person name="Schroeter R."/>
            <person name="Scoffone F."/>
            <person name="Sekiguchi J."/>
            <person name="Sekowska A."/>
            <person name="Seror S.J."/>
            <person name="Serror P."/>
            <person name="Shin B.-S."/>
            <person name="Soldo B."/>
            <person name="Sorokin A."/>
            <person name="Tacconi E."/>
            <person name="Takagi T."/>
            <person name="Takahashi H."/>
            <person name="Takemaru K."/>
            <person name="Takeuchi M."/>
            <person name="Tamakoshi A."/>
            <person name="Tanaka T."/>
            <person name="Terpstra P."/>
            <person name="Tognoni A."/>
            <person name="Tosato V."/>
            <person name="Uchiyama S."/>
            <person name="Vandenbol M."/>
            <person name="Vannier F."/>
            <person name="Vassarotti A."/>
            <person name="Viari A."/>
            <person name="Wambutt R."/>
            <person name="Wedler E."/>
            <person name="Wedler H."/>
            <person name="Weitzenegger T."/>
            <person name="Winters P."/>
            <person name="Wipat A."/>
            <person name="Yamamoto H."/>
            <person name="Yamane K."/>
            <person name="Yasumoto K."/>
            <person name="Yata K."/>
            <person name="Yoshida K."/>
            <person name="Yoshikawa H.-F."/>
            <person name="Zumstein E."/>
            <person name="Yoshikawa H."/>
            <person name="Danchin A."/>
        </authorList>
    </citation>
    <scope>NUCLEOTIDE SEQUENCE [LARGE SCALE GENOMIC DNA]</scope>
    <source>
        <strain>168</strain>
    </source>
</reference>
<organism>
    <name type="scientific">Bacillus subtilis (strain 168)</name>
    <dbReference type="NCBI Taxonomy" id="224308"/>
    <lineage>
        <taxon>Bacteria</taxon>
        <taxon>Bacillati</taxon>
        <taxon>Bacillota</taxon>
        <taxon>Bacilli</taxon>
        <taxon>Bacillales</taxon>
        <taxon>Bacillaceae</taxon>
        <taxon>Bacillus</taxon>
    </lineage>
</organism>
<name>YFIC_BACSU</name>
<protein>
    <recommendedName>
        <fullName>Uncharacterized ABC transporter ATP-binding protein YfiC</fullName>
    </recommendedName>
</protein>
<comment type="subcellular location">
    <subcellularLocation>
        <location evidence="3">Cell membrane</location>
        <topology evidence="2">Multi-pass membrane protein</topology>
    </subcellularLocation>
</comment>
<comment type="similarity">
    <text evidence="3">Belongs to the ABC transporter superfamily.</text>
</comment>
<gene>
    <name type="primary">yfiC</name>
    <name type="ordered locus">BSU08220</name>
</gene>
<accession>P54719</accession>
<feature type="chain" id="PRO_0000093141" description="Uncharacterized ABC transporter ATP-binding protein YfiC">
    <location>
        <begin position="1"/>
        <end position="604"/>
    </location>
</feature>
<feature type="transmembrane region" description="Helical" evidence="2">
    <location>
        <begin position="50"/>
        <end position="70"/>
    </location>
</feature>
<feature type="transmembrane region" description="Helical" evidence="2">
    <location>
        <begin position="86"/>
        <end position="106"/>
    </location>
</feature>
<feature type="transmembrane region" description="Helical" evidence="2">
    <location>
        <begin position="172"/>
        <end position="192"/>
    </location>
</feature>
<feature type="transmembrane region" description="Helical" evidence="2">
    <location>
        <begin position="288"/>
        <end position="308"/>
    </location>
</feature>
<feature type="transmembrane region" description="Helical" evidence="2">
    <location>
        <begin position="510"/>
        <end position="530"/>
    </location>
</feature>
<feature type="domain" description="ABC transmembrane type-1" evidence="2">
    <location>
        <begin position="49"/>
        <end position="332"/>
    </location>
</feature>
<feature type="domain" description="ABC transporter" evidence="1">
    <location>
        <begin position="366"/>
        <end position="600"/>
    </location>
</feature>
<feature type="binding site" evidence="1">
    <location>
        <begin position="399"/>
        <end position="406"/>
    </location>
    <ligand>
        <name>ATP</name>
        <dbReference type="ChEBI" id="CHEBI:30616"/>
    </ligand>
</feature>
<keyword id="KW-0067">ATP-binding</keyword>
<keyword id="KW-1003">Cell membrane</keyword>
<keyword id="KW-0472">Membrane</keyword>
<keyword id="KW-0547">Nucleotide-binding</keyword>
<keyword id="KW-1185">Reference proteome</keyword>
<keyword id="KW-0812">Transmembrane</keyword>
<keyword id="KW-1133">Transmembrane helix</keyword>
<keyword id="KW-0813">Transport</keyword>
<proteinExistence type="inferred from homology"/>
<sequence length="604" mass="67396">MLKDIRKPFQYPKLPIDKKEGAKKRAKAKDTKGTLRRIWSYLAERKGLLILVMLMVVISAIFGLLGPFVIGKAIDHFIVGKTVSGLIPVLLLLLAIYIIQSLSLWFQNYWMITISQGTVFRMRSELFTHLHELPIPFFDKQRHGELMSRVTNDIENVSSTLNTSVIQILSSVITFVGTIAVMLYMSPLLTLITLTIIPVMAASLKWITNRTGKLFKEQQKNLGDLNGYIEESVSGAKVIKAYSREKQITAEFLEKNAALKTSGFWAQTISGFIPKVMNSLNNLSFTMIAAIGGLFALKGWISIGSIVVFAEYSRQFTRPLNDLANQFNTMLSAIAGAERVFDVLDEKEEREDEKNAVHQPIQTGSIEFRDVSFGYDKGQQTLKHLQFTVPAGQSIAFVGPTGAGKTTVTNLLARFYEPNDGKILIDGTDIKTLTRASLRKNMGFVLQDSFLFQGTIRENIRYGRLDASDQEVEAAAKTANAHSFIERLPKGYDTVLTQNGSGISQGQKQLISIARAVLADPVLLILDEATSNIDTVTEVNIQEALARLMEGRTSVIIAHRLNTIQRADQIVVLKNGEMIEKGSHDELIRQKGFYSDLYESQFEK</sequence>
<evidence type="ECO:0000255" key="1">
    <source>
        <dbReference type="PROSITE-ProRule" id="PRU00434"/>
    </source>
</evidence>
<evidence type="ECO:0000255" key="2">
    <source>
        <dbReference type="PROSITE-ProRule" id="PRU00441"/>
    </source>
</evidence>
<evidence type="ECO:0000305" key="3"/>